<evidence type="ECO:0000255" key="1">
    <source>
        <dbReference type="HAMAP-Rule" id="MF_01058"/>
    </source>
</evidence>
<evidence type="ECO:0000256" key="2">
    <source>
        <dbReference type="SAM" id="MobiDB-lite"/>
    </source>
</evidence>
<dbReference type="EMBL" id="FM180568">
    <property type="protein sequence ID" value="CAS11720.1"/>
    <property type="molecule type" value="Genomic_DNA"/>
</dbReference>
<dbReference type="RefSeq" id="WP_001295266.1">
    <property type="nucleotide sequence ID" value="NC_011601.1"/>
</dbReference>
<dbReference type="SMR" id="B7UNI8"/>
<dbReference type="GeneID" id="75204333"/>
<dbReference type="KEGG" id="ecg:E2348C_4172"/>
<dbReference type="HOGENOM" id="CLU_094104_2_0_6"/>
<dbReference type="Proteomes" id="UP000008205">
    <property type="component" value="Chromosome"/>
</dbReference>
<dbReference type="GO" id="GO:0005096">
    <property type="term" value="F:GTPase activator activity"/>
    <property type="evidence" value="ECO:0007669"/>
    <property type="project" value="UniProtKB-KW"/>
</dbReference>
<dbReference type="GO" id="GO:0042254">
    <property type="term" value="P:ribosome biogenesis"/>
    <property type="evidence" value="ECO:0007669"/>
    <property type="project" value="UniProtKB-KW"/>
</dbReference>
<dbReference type="HAMAP" id="MF_01058">
    <property type="entry name" value="GAP_YihI"/>
    <property type="match status" value="1"/>
</dbReference>
<dbReference type="InterPro" id="IPR007336">
    <property type="entry name" value="YihI"/>
</dbReference>
<dbReference type="NCBIfam" id="NF003560">
    <property type="entry name" value="PRK05244.1-1"/>
    <property type="match status" value="1"/>
</dbReference>
<dbReference type="Pfam" id="PF04220">
    <property type="entry name" value="YihI"/>
    <property type="match status" value="1"/>
</dbReference>
<sequence>MKPSSSNSRSKGHAKARRKTREELDQEARDRKRQKKRRGHAPGSRAAGGNTTSGSKGQNAPKDPRIGSKTPIPLGVTEKVTKQHKPKSEKPMLSPQAELELLETDERLDALLERLEAGETLSAEEQSWVDAKLDRIDELMQKLGLSYDDDEEEEEDEKQEDMMRLLRGN</sequence>
<gene>
    <name evidence="1" type="primary">yihI</name>
    <name type="ordered locus">E2348C_4172</name>
</gene>
<name>YIHI_ECO27</name>
<comment type="function">
    <text evidence="1">A GTPase-activating protein (GAP) that modifies Der/EngA GTPase function. May play a role in ribosome biogenesis.</text>
</comment>
<comment type="subunit">
    <text evidence="1">Interacts with Der.</text>
</comment>
<comment type="similarity">
    <text evidence="1">Belongs to the YihI family.</text>
</comment>
<keyword id="KW-0343">GTPase activation</keyword>
<keyword id="KW-1185">Reference proteome</keyword>
<keyword id="KW-0690">Ribosome biogenesis</keyword>
<feature type="chain" id="PRO_1000149673" description="Der GTPase-activating protein YihI">
    <location>
        <begin position="1"/>
        <end position="169"/>
    </location>
</feature>
<feature type="region of interest" description="Disordered" evidence="2">
    <location>
        <begin position="1"/>
        <end position="98"/>
    </location>
</feature>
<feature type="region of interest" description="Disordered" evidence="2">
    <location>
        <begin position="144"/>
        <end position="169"/>
    </location>
</feature>
<feature type="compositionally biased region" description="Basic residues" evidence="2">
    <location>
        <begin position="10"/>
        <end position="19"/>
    </location>
</feature>
<feature type="compositionally biased region" description="Basic and acidic residues" evidence="2">
    <location>
        <begin position="20"/>
        <end position="30"/>
    </location>
</feature>
<feature type="compositionally biased region" description="Basic residues" evidence="2">
    <location>
        <begin position="31"/>
        <end position="40"/>
    </location>
</feature>
<feature type="compositionally biased region" description="Polar residues" evidence="2">
    <location>
        <begin position="49"/>
        <end position="58"/>
    </location>
</feature>
<feature type="compositionally biased region" description="Acidic residues" evidence="2">
    <location>
        <begin position="147"/>
        <end position="159"/>
    </location>
</feature>
<feature type="compositionally biased region" description="Basic and acidic residues" evidence="2">
    <location>
        <begin position="160"/>
        <end position="169"/>
    </location>
</feature>
<protein>
    <recommendedName>
        <fullName evidence="1">Der GTPase-activating protein YihI</fullName>
    </recommendedName>
</protein>
<organism>
    <name type="scientific">Escherichia coli O127:H6 (strain E2348/69 / EPEC)</name>
    <dbReference type="NCBI Taxonomy" id="574521"/>
    <lineage>
        <taxon>Bacteria</taxon>
        <taxon>Pseudomonadati</taxon>
        <taxon>Pseudomonadota</taxon>
        <taxon>Gammaproteobacteria</taxon>
        <taxon>Enterobacterales</taxon>
        <taxon>Enterobacteriaceae</taxon>
        <taxon>Escherichia</taxon>
    </lineage>
</organism>
<proteinExistence type="inferred from homology"/>
<accession>B7UNI8</accession>
<reference key="1">
    <citation type="journal article" date="2009" name="J. Bacteriol.">
        <title>Complete genome sequence and comparative genome analysis of enteropathogenic Escherichia coli O127:H6 strain E2348/69.</title>
        <authorList>
            <person name="Iguchi A."/>
            <person name="Thomson N.R."/>
            <person name="Ogura Y."/>
            <person name="Saunders D."/>
            <person name="Ooka T."/>
            <person name="Henderson I.R."/>
            <person name="Harris D."/>
            <person name="Asadulghani M."/>
            <person name="Kurokawa K."/>
            <person name="Dean P."/>
            <person name="Kenny B."/>
            <person name="Quail M.A."/>
            <person name="Thurston S."/>
            <person name="Dougan G."/>
            <person name="Hayashi T."/>
            <person name="Parkhill J."/>
            <person name="Frankel G."/>
        </authorList>
    </citation>
    <scope>NUCLEOTIDE SEQUENCE [LARGE SCALE GENOMIC DNA]</scope>
    <source>
        <strain>E2348/69 / EPEC</strain>
    </source>
</reference>